<gene>
    <name evidence="1" type="primary">adk</name>
    <name type="ordered locus">Dhaf_0443</name>
</gene>
<reference key="1">
    <citation type="journal article" date="2012" name="BMC Microbiol.">
        <title>Genome sequence of Desulfitobacterium hafniense DCB-2, a Gram-positive anaerobe capable of dehalogenation and metal reduction.</title>
        <authorList>
            <person name="Kim S.H."/>
            <person name="Harzman C."/>
            <person name="Davis J.K."/>
            <person name="Hutcheson R."/>
            <person name="Broderick J.B."/>
            <person name="Marsh T.L."/>
            <person name="Tiedje J.M."/>
        </authorList>
    </citation>
    <scope>NUCLEOTIDE SEQUENCE [LARGE SCALE GENOMIC DNA]</scope>
    <source>
        <strain>DSM 10664 / DCB-2</strain>
    </source>
</reference>
<evidence type="ECO:0000255" key="1">
    <source>
        <dbReference type="HAMAP-Rule" id="MF_00235"/>
    </source>
</evidence>
<protein>
    <recommendedName>
        <fullName evidence="1">Adenylate kinase</fullName>
        <shortName evidence="1">AK</shortName>
        <ecNumber evidence="1">2.7.4.3</ecNumber>
    </recommendedName>
    <alternativeName>
        <fullName evidence="1">ATP-AMP transphosphorylase</fullName>
    </alternativeName>
    <alternativeName>
        <fullName evidence="1">ATP:AMP phosphotransferase</fullName>
    </alternativeName>
    <alternativeName>
        <fullName evidence="1">Adenylate monophosphate kinase</fullName>
    </alternativeName>
</protein>
<organism>
    <name type="scientific">Desulfitobacterium hafniense (strain DSM 10664 / DCB-2)</name>
    <dbReference type="NCBI Taxonomy" id="272564"/>
    <lineage>
        <taxon>Bacteria</taxon>
        <taxon>Bacillati</taxon>
        <taxon>Bacillota</taxon>
        <taxon>Clostridia</taxon>
        <taxon>Eubacteriales</taxon>
        <taxon>Desulfitobacteriaceae</taxon>
        <taxon>Desulfitobacterium</taxon>
    </lineage>
</organism>
<feature type="chain" id="PRO_1000191137" description="Adenylate kinase">
    <location>
        <begin position="1"/>
        <end position="217"/>
    </location>
</feature>
<feature type="region of interest" description="NMP" evidence="1">
    <location>
        <begin position="30"/>
        <end position="59"/>
    </location>
</feature>
<feature type="region of interest" description="LID" evidence="1">
    <location>
        <begin position="126"/>
        <end position="163"/>
    </location>
</feature>
<feature type="binding site" evidence="1">
    <location>
        <begin position="10"/>
        <end position="15"/>
    </location>
    <ligand>
        <name>ATP</name>
        <dbReference type="ChEBI" id="CHEBI:30616"/>
    </ligand>
</feature>
<feature type="binding site" evidence="1">
    <location>
        <position position="31"/>
    </location>
    <ligand>
        <name>AMP</name>
        <dbReference type="ChEBI" id="CHEBI:456215"/>
    </ligand>
</feature>
<feature type="binding site" evidence="1">
    <location>
        <position position="36"/>
    </location>
    <ligand>
        <name>AMP</name>
        <dbReference type="ChEBI" id="CHEBI:456215"/>
    </ligand>
</feature>
<feature type="binding site" evidence="1">
    <location>
        <begin position="57"/>
        <end position="59"/>
    </location>
    <ligand>
        <name>AMP</name>
        <dbReference type="ChEBI" id="CHEBI:456215"/>
    </ligand>
</feature>
<feature type="binding site" evidence="1">
    <location>
        <begin position="85"/>
        <end position="88"/>
    </location>
    <ligand>
        <name>AMP</name>
        <dbReference type="ChEBI" id="CHEBI:456215"/>
    </ligand>
</feature>
<feature type="binding site" evidence="1">
    <location>
        <position position="92"/>
    </location>
    <ligand>
        <name>AMP</name>
        <dbReference type="ChEBI" id="CHEBI:456215"/>
    </ligand>
</feature>
<feature type="binding site" evidence="1">
    <location>
        <position position="127"/>
    </location>
    <ligand>
        <name>ATP</name>
        <dbReference type="ChEBI" id="CHEBI:30616"/>
    </ligand>
</feature>
<feature type="binding site" evidence="1">
    <location>
        <position position="130"/>
    </location>
    <ligand>
        <name>Zn(2+)</name>
        <dbReference type="ChEBI" id="CHEBI:29105"/>
        <note>structural</note>
    </ligand>
</feature>
<feature type="binding site" evidence="1">
    <location>
        <position position="133"/>
    </location>
    <ligand>
        <name>Zn(2+)</name>
        <dbReference type="ChEBI" id="CHEBI:29105"/>
        <note>structural</note>
    </ligand>
</feature>
<feature type="binding site" evidence="1">
    <location>
        <begin position="136"/>
        <end position="137"/>
    </location>
    <ligand>
        <name>ATP</name>
        <dbReference type="ChEBI" id="CHEBI:30616"/>
    </ligand>
</feature>
<feature type="binding site" evidence="1">
    <location>
        <position position="150"/>
    </location>
    <ligand>
        <name>Zn(2+)</name>
        <dbReference type="ChEBI" id="CHEBI:29105"/>
        <note>structural</note>
    </ligand>
</feature>
<feature type="binding site" evidence="1">
    <location>
        <position position="153"/>
    </location>
    <ligand>
        <name>Zn(2+)</name>
        <dbReference type="ChEBI" id="CHEBI:29105"/>
        <note>structural</note>
    </ligand>
</feature>
<feature type="binding site" evidence="1">
    <location>
        <position position="160"/>
    </location>
    <ligand>
        <name>AMP</name>
        <dbReference type="ChEBI" id="CHEBI:456215"/>
    </ligand>
</feature>
<feature type="binding site" evidence="1">
    <location>
        <position position="171"/>
    </location>
    <ligand>
        <name>AMP</name>
        <dbReference type="ChEBI" id="CHEBI:456215"/>
    </ligand>
</feature>
<feature type="binding site" evidence="1">
    <location>
        <position position="199"/>
    </location>
    <ligand>
        <name>ATP</name>
        <dbReference type="ChEBI" id="CHEBI:30616"/>
    </ligand>
</feature>
<accession>B8G1Y7</accession>
<sequence>MRAILMGPPGAGKGTQAADLITRYQIPHISTGDMFRAAIKAGTALGMKAKEYMDAGSLVPDEVTIGIVAERLAEPDCSKGFLLDGFPRTVAQADALDKILTQLKMNLDGVINIEVPEAKLLERLTGRRICRQCGGTYHMVFNPPAAEAVCDKCGGELYQRSDDTLETAKNRLQVYNDQTQPLIDYYREKGLLKEINGDQDIAQVLQDIVDAMEHGHD</sequence>
<comment type="function">
    <text evidence="1">Catalyzes the reversible transfer of the terminal phosphate group between ATP and AMP. Plays an important role in cellular energy homeostasis and in adenine nucleotide metabolism.</text>
</comment>
<comment type="catalytic activity">
    <reaction evidence="1">
        <text>AMP + ATP = 2 ADP</text>
        <dbReference type="Rhea" id="RHEA:12973"/>
        <dbReference type="ChEBI" id="CHEBI:30616"/>
        <dbReference type="ChEBI" id="CHEBI:456215"/>
        <dbReference type="ChEBI" id="CHEBI:456216"/>
        <dbReference type="EC" id="2.7.4.3"/>
    </reaction>
</comment>
<comment type="pathway">
    <text evidence="1">Purine metabolism; AMP biosynthesis via salvage pathway; AMP from ADP: step 1/1.</text>
</comment>
<comment type="subunit">
    <text evidence="1">Monomer.</text>
</comment>
<comment type="subcellular location">
    <subcellularLocation>
        <location evidence="1">Cytoplasm</location>
    </subcellularLocation>
</comment>
<comment type="domain">
    <text evidence="1">Consists of three domains, a large central CORE domain and two small peripheral domains, NMPbind and LID, which undergo movements during catalysis. The LID domain closes over the site of phosphoryl transfer upon ATP binding. Assembling and dissambling the active center during each catalytic cycle provides an effective means to prevent ATP hydrolysis. Some bacteria have evolved a zinc-coordinating structure that stabilizes the LID domain.</text>
</comment>
<comment type="similarity">
    <text evidence="1">Belongs to the adenylate kinase family.</text>
</comment>
<keyword id="KW-0067">ATP-binding</keyword>
<keyword id="KW-0963">Cytoplasm</keyword>
<keyword id="KW-0418">Kinase</keyword>
<keyword id="KW-0479">Metal-binding</keyword>
<keyword id="KW-0545">Nucleotide biosynthesis</keyword>
<keyword id="KW-0547">Nucleotide-binding</keyword>
<keyword id="KW-0808">Transferase</keyword>
<keyword id="KW-0862">Zinc</keyword>
<name>KAD_DESHD</name>
<dbReference type="EC" id="2.7.4.3" evidence="1"/>
<dbReference type="EMBL" id="CP001336">
    <property type="protein sequence ID" value="ACL18510.1"/>
    <property type="molecule type" value="Genomic_DNA"/>
</dbReference>
<dbReference type="RefSeq" id="WP_005810125.1">
    <property type="nucleotide sequence ID" value="NC_011830.1"/>
</dbReference>
<dbReference type="SMR" id="B8G1Y7"/>
<dbReference type="KEGG" id="dhd:Dhaf_0443"/>
<dbReference type="HOGENOM" id="CLU_032354_1_2_9"/>
<dbReference type="UniPathway" id="UPA00588">
    <property type="reaction ID" value="UER00649"/>
</dbReference>
<dbReference type="Proteomes" id="UP000007726">
    <property type="component" value="Chromosome"/>
</dbReference>
<dbReference type="GO" id="GO:0005737">
    <property type="term" value="C:cytoplasm"/>
    <property type="evidence" value="ECO:0007669"/>
    <property type="project" value="UniProtKB-SubCell"/>
</dbReference>
<dbReference type="GO" id="GO:0004017">
    <property type="term" value="F:adenylate kinase activity"/>
    <property type="evidence" value="ECO:0007669"/>
    <property type="project" value="UniProtKB-UniRule"/>
</dbReference>
<dbReference type="GO" id="GO:0005524">
    <property type="term" value="F:ATP binding"/>
    <property type="evidence" value="ECO:0007669"/>
    <property type="project" value="UniProtKB-UniRule"/>
</dbReference>
<dbReference type="GO" id="GO:0008270">
    <property type="term" value="F:zinc ion binding"/>
    <property type="evidence" value="ECO:0007669"/>
    <property type="project" value="UniProtKB-UniRule"/>
</dbReference>
<dbReference type="GO" id="GO:0044209">
    <property type="term" value="P:AMP salvage"/>
    <property type="evidence" value="ECO:0007669"/>
    <property type="project" value="UniProtKB-UniRule"/>
</dbReference>
<dbReference type="CDD" id="cd01428">
    <property type="entry name" value="ADK"/>
    <property type="match status" value="1"/>
</dbReference>
<dbReference type="FunFam" id="3.40.50.300:FF:000106">
    <property type="entry name" value="Adenylate kinase mitochondrial"/>
    <property type="match status" value="1"/>
</dbReference>
<dbReference type="Gene3D" id="3.40.50.300">
    <property type="entry name" value="P-loop containing nucleotide triphosphate hydrolases"/>
    <property type="match status" value="1"/>
</dbReference>
<dbReference type="HAMAP" id="MF_00235">
    <property type="entry name" value="Adenylate_kinase_Adk"/>
    <property type="match status" value="1"/>
</dbReference>
<dbReference type="InterPro" id="IPR006259">
    <property type="entry name" value="Adenyl_kin_sub"/>
</dbReference>
<dbReference type="InterPro" id="IPR000850">
    <property type="entry name" value="Adenylat/UMP-CMP_kin"/>
</dbReference>
<dbReference type="InterPro" id="IPR033690">
    <property type="entry name" value="Adenylat_kinase_CS"/>
</dbReference>
<dbReference type="InterPro" id="IPR007862">
    <property type="entry name" value="Adenylate_kinase_lid-dom"/>
</dbReference>
<dbReference type="InterPro" id="IPR027417">
    <property type="entry name" value="P-loop_NTPase"/>
</dbReference>
<dbReference type="NCBIfam" id="TIGR01351">
    <property type="entry name" value="adk"/>
    <property type="match status" value="1"/>
</dbReference>
<dbReference type="NCBIfam" id="NF001380">
    <property type="entry name" value="PRK00279.1-2"/>
    <property type="match status" value="1"/>
</dbReference>
<dbReference type="NCBIfam" id="NF001381">
    <property type="entry name" value="PRK00279.1-3"/>
    <property type="match status" value="1"/>
</dbReference>
<dbReference type="NCBIfam" id="NF011100">
    <property type="entry name" value="PRK14527.1"/>
    <property type="match status" value="1"/>
</dbReference>
<dbReference type="PANTHER" id="PTHR23359">
    <property type="entry name" value="NUCLEOTIDE KINASE"/>
    <property type="match status" value="1"/>
</dbReference>
<dbReference type="Pfam" id="PF00406">
    <property type="entry name" value="ADK"/>
    <property type="match status" value="1"/>
</dbReference>
<dbReference type="Pfam" id="PF05191">
    <property type="entry name" value="ADK_lid"/>
    <property type="match status" value="1"/>
</dbReference>
<dbReference type="PRINTS" id="PR00094">
    <property type="entry name" value="ADENYLTKNASE"/>
</dbReference>
<dbReference type="SUPFAM" id="SSF52540">
    <property type="entry name" value="P-loop containing nucleoside triphosphate hydrolases"/>
    <property type="match status" value="1"/>
</dbReference>
<dbReference type="PROSITE" id="PS00113">
    <property type="entry name" value="ADENYLATE_KINASE"/>
    <property type="match status" value="1"/>
</dbReference>
<proteinExistence type="inferred from homology"/>